<gene>
    <name type="primary">MED28</name>
</gene>
<comment type="function">
    <text evidence="1">Component of the Mediator complex, a coactivator involved in the regulated transcription of nearly all RNA polymerase II-dependent genes. Mediator functions as a bridge to convey information from gene-specific regulatory proteins to the basal RNA polymerase II transcription machinery. Mediator is recruited to promoters by direct interactions with regulatory proteins and serves as a scaffold for the assembly of a functional preinitiation complex with RNA polymerase II and the general transcription factors. May be part of a complex containing NF2/merlin that participates in cellular signaling to the actin cytoskeleton downstream of tyrosine kinase signaling pathways (By similarity).</text>
</comment>
<comment type="subunit">
    <text evidence="1">Component of the Mediator complex, which is composed of MED1, MED4, MED6, MED7, MED8, MED9, MED10, MED11, MED12, MED13, MED13L, MED14, MED15, MED16, MED17, MED18, MED19, MED20, MED21, MED22, MED23, MED24, MED25, MED26, MED27, MED29, MED30, MED31, CCNC, CDK8 and CDC2L6/CDK11. The MED12, MED13, CCNC and CDK8 subunits form a distinct module termed the CDK8 module. Mediator containing the CDK8 module is less active than Mediator lacking this module in supporting transcriptional activation. Individual preparations of the Mediator complex lacking one or more distinct subunits have been variously termed ARC, CRSP, DRIP, PC2, SMCC and TRAP. Forms a ternary complex with NF2/merlin and GRB2. Binds to actin (By similarity).</text>
</comment>
<comment type="subcellular location">
    <subcellularLocation>
        <location evidence="1">Nucleus</location>
    </subcellularLocation>
    <subcellularLocation>
        <location evidence="1">Cytoplasm</location>
    </subcellularLocation>
    <subcellularLocation>
        <location evidence="1">Membrane</location>
    </subcellularLocation>
    <text evidence="1">May be also cytoplasmic and membrane-associated.</text>
</comment>
<comment type="similarity">
    <text evidence="4">Belongs to the Mediator complex subunit 28 family.</text>
</comment>
<reference key="1">
    <citation type="submission" date="2005-11" db="EMBL/GenBank/DDBJ databases">
        <authorList>
            <consortium name="NIH - Mammalian Gene Collection (MGC) project"/>
        </authorList>
    </citation>
    <scope>NUCLEOTIDE SEQUENCE [LARGE SCALE MRNA]</scope>
    <source>
        <strain>Crossbred X Angus</strain>
        <tissue>Liver</tissue>
    </source>
</reference>
<feature type="chain" id="PRO_0000246168" description="Mediator of RNA polymerase II transcription subunit 28">
    <location>
        <begin position="1"/>
        <end position="178"/>
    </location>
</feature>
<feature type="region of interest" description="Disordered" evidence="3">
    <location>
        <begin position="1"/>
        <end position="25"/>
    </location>
</feature>
<feature type="coiled-coil region" evidence="2">
    <location>
        <begin position="109"/>
        <end position="145"/>
    </location>
</feature>
<organism>
    <name type="scientific">Bos taurus</name>
    <name type="common">Bovine</name>
    <dbReference type="NCBI Taxonomy" id="9913"/>
    <lineage>
        <taxon>Eukaryota</taxon>
        <taxon>Metazoa</taxon>
        <taxon>Chordata</taxon>
        <taxon>Craniata</taxon>
        <taxon>Vertebrata</taxon>
        <taxon>Euteleostomi</taxon>
        <taxon>Mammalia</taxon>
        <taxon>Eutheria</taxon>
        <taxon>Laurasiatheria</taxon>
        <taxon>Artiodactyla</taxon>
        <taxon>Ruminantia</taxon>
        <taxon>Pecora</taxon>
        <taxon>Bovidae</taxon>
        <taxon>Bovinae</taxon>
        <taxon>Bos</taxon>
    </lineage>
</organism>
<sequence length="178" mass="19764">MAAPLGGMFSGQQPGPPQPPPGLLGQASLLQATPGVPRTSNSTLVDELESSFEACFASLVSQDYVNGTDQEEIRTGVDQCIKKFLDIARQTECFFLQKRLQLSVQKPEQVIKEDVSELRNELQRKDALVQKHLTKLRHWQQVLEDINMQHKKPADIPQGSLAYLEQASANIPAPMKQT</sequence>
<accession>Q2TBN4</accession>
<dbReference type="EMBL" id="BC109886">
    <property type="protein sequence ID" value="AAI09887.1"/>
    <property type="molecule type" value="mRNA"/>
</dbReference>
<dbReference type="RefSeq" id="NP_001033627.1">
    <property type="nucleotide sequence ID" value="NM_001038538.1"/>
</dbReference>
<dbReference type="SMR" id="Q2TBN4"/>
<dbReference type="FunCoup" id="Q2TBN4">
    <property type="interactions" value="3554"/>
</dbReference>
<dbReference type="STRING" id="9913.ENSBTAP00000025895"/>
<dbReference type="PaxDb" id="9913-ENSBTAP00000025895"/>
<dbReference type="GeneID" id="513972"/>
<dbReference type="KEGG" id="bta:513972"/>
<dbReference type="CTD" id="80306"/>
<dbReference type="eggNOG" id="ENOG502QSN9">
    <property type="taxonomic scope" value="Eukaryota"/>
</dbReference>
<dbReference type="InParanoid" id="Q2TBN4"/>
<dbReference type="OrthoDB" id="2286203at2759"/>
<dbReference type="Proteomes" id="UP000009136">
    <property type="component" value="Unplaced"/>
</dbReference>
<dbReference type="GO" id="GO:0005737">
    <property type="term" value="C:cytoplasm"/>
    <property type="evidence" value="ECO:0007669"/>
    <property type="project" value="UniProtKB-SubCell"/>
</dbReference>
<dbReference type="GO" id="GO:0016592">
    <property type="term" value="C:mediator complex"/>
    <property type="evidence" value="ECO:0000318"/>
    <property type="project" value="GO_Central"/>
</dbReference>
<dbReference type="GO" id="GO:0016020">
    <property type="term" value="C:membrane"/>
    <property type="evidence" value="ECO:0007669"/>
    <property type="project" value="UniProtKB-SubCell"/>
</dbReference>
<dbReference type="GO" id="GO:0003779">
    <property type="term" value="F:actin binding"/>
    <property type="evidence" value="ECO:0007669"/>
    <property type="project" value="UniProtKB-KW"/>
</dbReference>
<dbReference type="InterPro" id="IPR021640">
    <property type="entry name" value="Mediator_Med28"/>
</dbReference>
<dbReference type="PANTHER" id="PTHR13512">
    <property type="entry name" value="MEDIATOR COMPLEX SUBUNIT 28"/>
    <property type="match status" value="1"/>
</dbReference>
<dbReference type="PANTHER" id="PTHR13512:SF2">
    <property type="entry name" value="MEDIATOR OF RNA POLYMERASE II TRANSCRIPTION SUBUNIT 28"/>
    <property type="match status" value="1"/>
</dbReference>
<dbReference type="Pfam" id="PF11594">
    <property type="entry name" value="Med28"/>
    <property type="match status" value="1"/>
</dbReference>
<name>MED28_BOVIN</name>
<protein>
    <recommendedName>
        <fullName>Mediator of RNA polymerase II transcription subunit 28</fullName>
    </recommendedName>
    <alternativeName>
        <fullName>Mediator complex subunit 28</fullName>
    </alternativeName>
</protein>
<evidence type="ECO:0000250" key="1"/>
<evidence type="ECO:0000255" key="2"/>
<evidence type="ECO:0000256" key="3">
    <source>
        <dbReference type="SAM" id="MobiDB-lite"/>
    </source>
</evidence>
<evidence type="ECO:0000305" key="4"/>
<keyword id="KW-0009">Actin-binding</keyword>
<keyword id="KW-0010">Activator</keyword>
<keyword id="KW-0175">Coiled coil</keyword>
<keyword id="KW-0963">Cytoplasm</keyword>
<keyword id="KW-0472">Membrane</keyword>
<keyword id="KW-0539">Nucleus</keyword>
<keyword id="KW-1185">Reference proteome</keyword>
<keyword id="KW-0804">Transcription</keyword>
<keyword id="KW-0805">Transcription regulation</keyword>
<proteinExistence type="evidence at transcript level"/>